<gene>
    <name evidence="1" type="primary">gpsA</name>
    <name type="ordered locus">CPS_4387</name>
</gene>
<keyword id="KW-0963">Cytoplasm</keyword>
<keyword id="KW-0444">Lipid biosynthesis</keyword>
<keyword id="KW-0443">Lipid metabolism</keyword>
<keyword id="KW-0520">NAD</keyword>
<keyword id="KW-0521">NADP</keyword>
<keyword id="KW-0547">Nucleotide-binding</keyword>
<keyword id="KW-0560">Oxidoreductase</keyword>
<keyword id="KW-0594">Phospholipid biosynthesis</keyword>
<keyword id="KW-1208">Phospholipid metabolism</keyword>
<feature type="chain" id="PRO_0000255300" description="Glycerol-3-phosphate dehydrogenase [NAD(P)+]">
    <location>
        <begin position="1"/>
        <end position="334"/>
    </location>
</feature>
<feature type="active site" description="Proton acceptor" evidence="1">
    <location>
        <position position="194"/>
    </location>
</feature>
<feature type="binding site" evidence="1">
    <location>
        <position position="14"/>
    </location>
    <ligand>
        <name>NADPH</name>
        <dbReference type="ChEBI" id="CHEBI:57783"/>
    </ligand>
</feature>
<feature type="binding site" evidence="1">
    <location>
        <position position="15"/>
    </location>
    <ligand>
        <name>NADPH</name>
        <dbReference type="ChEBI" id="CHEBI:57783"/>
    </ligand>
</feature>
<feature type="binding site" evidence="1">
    <location>
        <position position="35"/>
    </location>
    <ligand>
        <name>NADPH</name>
        <dbReference type="ChEBI" id="CHEBI:57783"/>
    </ligand>
</feature>
<feature type="binding site" evidence="1">
    <location>
        <position position="109"/>
    </location>
    <ligand>
        <name>NADPH</name>
        <dbReference type="ChEBI" id="CHEBI:57783"/>
    </ligand>
</feature>
<feature type="binding site" evidence="1">
    <location>
        <position position="109"/>
    </location>
    <ligand>
        <name>sn-glycerol 3-phosphate</name>
        <dbReference type="ChEBI" id="CHEBI:57597"/>
    </ligand>
</feature>
<feature type="binding site" evidence="1">
    <location>
        <position position="138"/>
    </location>
    <ligand>
        <name>sn-glycerol 3-phosphate</name>
        <dbReference type="ChEBI" id="CHEBI:57597"/>
    </ligand>
</feature>
<feature type="binding site" evidence="1">
    <location>
        <position position="140"/>
    </location>
    <ligand>
        <name>sn-glycerol 3-phosphate</name>
        <dbReference type="ChEBI" id="CHEBI:57597"/>
    </ligand>
</feature>
<feature type="binding site" evidence="1">
    <location>
        <position position="142"/>
    </location>
    <ligand>
        <name>NADPH</name>
        <dbReference type="ChEBI" id="CHEBI:57783"/>
    </ligand>
</feature>
<feature type="binding site" evidence="1">
    <location>
        <position position="194"/>
    </location>
    <ligand>
        <name>sn-glycerol 3-phosphate</name>
        <dbReference type="ChEBI" id="CHEBI:57597"/>
    </ligand>
</feature>
<feature type="binding site" evidence="1">
    <location>
        <position position="247"/>
    </location>
    <ligand>
        <name>sn-glycerol 3-phosphate</name>
        <dbReference type="ChEBI" id="CHEBI:57597"/>
    </ligand>
</feature>
<feature type="binding site" evidence="1">
    <location>
        <position position="257"/>
    </location>
    <ligand>
        <name>sn-glycerol 3-phosphate</name>
        <dbReference type="ChEBI" id="CHEBI:57597"/>
    </ligand>
</feature>
<feature type="binding site" evidence="1">
    <location>
        <position position="258"/>
    </location>
    <ligand>
        <name>NADPH</name>
        <dbReference type="ChEBI" id="CHEBI:57783"/>
    </ligand>
</feature>
<feature type="binding site" evidence="1">
    <location>
        <position position="258"/>
    </location>
    <ligand>
        <name>sn-glycerol 3-phosphate</name>
        <dbReference type="ChEBI" id="CHEBI:57597"/>
    </ligand>
</feature>
<feature type="binding site" evidence="1">
    <location>
        <position position="259"/>
    </location>
    <ligand>
        <name>sn-glycerol 3-phosphate</name>
        <dbReference type="ChEBI" id="CHEBI:57597"/>
    </ligand>
</feature>
<feature type="binding site" evidence="1">
    <location>
        <position position="282"/>
    </location>
    <ligand>
        <name>NADPH</name>
        <dbReference type="ChEBI" id="CHEBI:57783"/>
    </ligand>
</feature>
<feature type="binding site" evidence="1">
    <location>
        <position position="284"/>
    </location>
    <ligand>
        <name>NADPH</name>
        <dbReference type="ChEBI" id="CHEBI:57783"/>
    </ligand>
</feature>
<sequence>MSLAAKITVLGAGSYGTALAICLARNGHKTLLWGRDDNHVAAMEQDRENNKYLADCPFPENLALEADLEKAVQASDNLLVVVPSHAFADMLKQIKPMLTENAKIAWATKGLDPQTGDLLQNVARTVLGDRVSLAVLSGPTFAKEMASGLPTAISLSSEDDEFVAELSDLLHCEKRFRVYSNKDFIGVQLGGAVKNVIAIAAGIADGIGFGANARTALITRGLAEMTRLGLALNAEPATFMGMAGLGDLVLTCTDNQSRNRRFGLALGQGKEVEQAITDIGQVVEGYRNTKEVYMLAQRHDVEMPIVEQVYQVLYRGKDAKLAAADLLSRDKKFE</sequence>
<protein>
    <recommendedName>
        <fullName evidence="1">Glycerol-3-phosphate dehydrogenase [NAD(P)+]</fullName>
        <ecNumber evidence="1">1.1.1.94</ecNumber>
    </recommendedName>
    <alternativeName>
        <fullName evidence="1">NAD(P)(+)-dependent glycerol-3-phosphate dehydrogenase</fullName>
    </alternativeName>
    <alternativeName>
        <fullName evidence="1">NAD(P)H-dependent dihydroxyacetone-phosphate reductase</fullName>
    </alternativeName>
</protein>
<organism>
    <name type="scientific">Colwellia psychrerythraea (strain 34H / ATCC BAA-681)</name>
    <name type="common">Vibrio psychroerythus</name>
    <dbReference type="NCBI Taxonomy" id="167879"/>
    <lineage>
        <taxon>Bacteria</taxon>
        <taxon>Pseudomonadati</taxon>
        <taxon>Pseudomonadota</taxon>
        <taxon>Gammaproteobacteria</taxon>
        <taxon>Alteromonadales</taxon>
        <taxon>Colwelliaceae</taxon>
        <taxon>Colwellia</taxon>
    </lineage>
</organism>
<proteinExistence type="inferred from homology"/>
<accession>Q47VY6</accession>
<comment type="function">
    <text evidence="1">Catalyzes the reduction of the glycolytic intermediate dihydroxyacetone phosphate (DHAP) to sn-glycerol 3-phosphate (G3P), the key precursor for phospholipid synthesis.</text>
</comment>
<comment type="catalytic activity">
    <reaction evidence="1">
        <text>sn-glycerol 3-phosphate + NAD(+) = dihydroxyacetone phosphate + NADH + H(+)</text>
        <dbReference type="Rhea" id="RHEA:11092"/>
        <dbReference type="ChEBI" id="CHEBI:15378"/>
        <dbReference type="ChEBI" id="CHEBI:57540"/>
        <dbReference type="ChEBI" id="CHEBI:57597"/>
        <dbReference type="ChEBI" id="CHEBI:57642"/>
        <dbReference type="ChEBI" id="CHEBI:57945"/>
        <dbReference type="EC" id="1.1.1.94"/>
    </reaction>
    <physiologicalReaction direction="right-to-left" evidence="1">
        <dbReference type="Rhea" id="RHEA:11094"/>
    </physiologicalReaction>
</comment>
<comment type="catalytic activity">
    <reaction evidence="1">
        <text>sn-glycerol 3-phosphate + NADP(+) = dihydroxyacetone phosphate + NADPH + H(+)</text>
        <dbReference type="Rhea" id="RHEA:11096"/>
        <dbReference type="ChEBI" id="CHEBI:15378"/>
        <dbReference type="ChEBI" id="CHEBI:57597"/>
        <dbReference type="ChEBI" id="CHEBI:57642"/>
        <dbReference type="ChEBI" id="CHEBI:57783"/>
        <dbReference type="ChEBI" id="CHEBI:58349"/>
        <dbReference type="EC" id="1.1.1.94"/>
    </reaction>
    <physiologicalReaction direction="right-to-left" evidence="1">
        <dbReference type="Rhea" id="RHEA:11098"/>
    </physiologicalReaction>
</comment>
<comment type="pathway">
    <text evidence="1">Membrane lipid metabolism; glycerophospholipid metabolism.</text>
</comment>
<comment type="subcellular location">
    <subcellularLocation>
        <location evidence="1">Cytoplasm</location>
    </subcellularLocation>
</comment>
<comment type="similarity">
    <text evidence="1">Belongs to the NAD-dependent glycerol-3-phosphate dehydrogenase family.</text>
</comment>
<name>GPDA_COLP3</name>
<evidence type="ECO:0000255" key="1">
    <source>
        <dbReference type="HAMAP-Rule" id="MF_00394"/>
    </source>
</evidence>
<dbReference type="EC" id="1.1.1.94" evidence="1"/>
<dbReference type="EMBL" id="CP000083">
    <property type="protein sequence ID" value="AAZ25009.1"/>
    <property type="molecule type" value="Genomic_DNA"/>
</dbReference>
<dbReference type="RefSeq" id="WP_011045117.1">
    <property type="nucleotide sequence ID" value="NC_003910.7"/>
</dbReference>
<dbReference type="SMR" id="Q47VY6"/>
<dbReference type="STRING" id="167879.CPS_4387"/>
<dbReference type="KEGG" id="cps:CPS_4387"/>
<dbReference type="eggNOG" id="COG0240">
    <property type="taxonomic scope" value="Bacteria"/>
</dbReference>
<dbReference type="HOGENOM" id="CLU_033449_0_2_6"/>
<dbReference type="UniPathway" id="UPA00940"/>
<dbReference type="Proteomes" id="UP000000547">
    <property type="component" value="Chromosome"/>
</dbReference>
<dbReference type="GO" id="GO:0005829">
    <property type="term" value="C:cytosol"/>
    <property type="evidence" value="ECO:0007669"/>
    <property type="project" value="TreeGrafter"/>
</dbReference>
<dbReference type="GO" id="GO:0047952">
    <property type="term" value="F:glycerol-3-phosphate dehydrogenase [NAD(P)+] activity"/>
    <property type="evidence" value="ECO:0007669"/>
    <property type="project" value="UniProtKB-UniRule"/>
</dbReference>
<dbReference type="GO" id="GO:0051287">
    <property type="term" value="F:NAD binding"/>
    <property type="evidence" value="ECO:0007669"/>
    <property type="project" value="InterPro"/>
</dbReference>
<dbReference type="GO" id="GO:0005975">
    <property type="term" value="P:carbohydrate metabolic process"/>
    <property type="evidence" value="ECO:0007669"/>
    <property type="project" value="InterPro"/>
</dbReference>
<dbReference type="GO" id="GO:0046167">
    <property type="term" value="P:glycerol-3-phosphate biosynthetic process"/>
    <property type="evidence" value="ECO:0007669"/>
    <property type="project" value="UniProtKB-UniRule"/>
</dbReference>
<dbReference type="GO" id="GO:0046168">
    <property type="term" value="P:glycerol-3-phosphate catabolic process"/>
    <property type="evidence" value="ECO:0007669"/>
    <property type="project" value="InterPro"/>
</dbReference>
<dbReference type="GO" id="GO:0046474">
    <property type="term" value="P:glycerophospholipid biosynthetic process"/>
    <property type="evidence" value="ECO:0007669"/>
    <property type="project" value="TreeGrafter"/>
</dbReference>
<dbReference type="FunFam" id="1.10.1040.10:FF:000001">
    <property type="entry name" value="Glycerol-3-phosphate dehydrogenase [NAD(P)+]"/>
    <property type="match status" value="1"/>
</dbReference>
<dbReference type="FunFam" id="3.40.50.720:FF:000019">
    <property type="entry name" value="Glycerol-3-phosphate dehydrogenase [NAD(P)+]"/>
    <property type="match status" value="1"/>
</dbReference>
<dbReference type="Gene3D" id="1.10.1040.10">
    <property type="entry name" value="N-(1-d-carboxylethyl)-l-norvaline Dehydrogenase, domain 2"/>
    <property type="match status" value="1"/>
</dbReference>
<dbReference type="Gene3D" id="3.40.50.720">
    <property type="entry name" value="NAD(P)-binding Rossmann-like Domain"/>
    <property type="match status" value="1"/>
</dbReference>
<dbReference type="HAMAP" id="MF_00394">
    <property type="entry name" value="NAD_Glyc3P_dehydrog"/>
    <property type="match status" value="1"/>
</dbReference>
<dbReference type="InterPro" id="IPR008927">
    <property type="entry name" value="6-PGluconate_DH-like_C_sf"/>
</dbReference>
<dbReference type="InterPro" id="IPR013328">
    <property type="entry name" value="6PGD_dom2"/>
</dbReference>
<dbReference type="InterPro" id="IPR006168">
    <property type="entry name" value="G3P_DH_NAD-dep"/>
</dbReference>
<dbReference type="InterPro" id="IPR006109">
    <property type="entry name" value="G3P_DH_NAD-dep_C"/>
</dbReference>
<dbReference type="InterPro" id="IPR011128">
    <property type="entry name" value="G3P_DH_NAD-dep_N"/>
</dbReference>
<dbReference type="InterPro" id="IPR036291">
    <property type="entry name" value="NAD(P)-bd_dom_sf"/>
</dbReference>
<dbReference type="NCBIfam" id="NF000939">
    <property type="entry name" value="PRK00094.1-1"/>
    <property type="match status" value="1"/>
</dbReference>
<dbReference type="NCBIfam" id="NF000940">
    <property type="entry name" value="PRK00094.1-2"/>
    <property type="match status" value="1"/>
</dbReference>
<dbReference type="NCBIfam" id="NF000942">
    <property type="entry name" value="PRK00094.1-4"/>
    <property type="match status" value="1"/>
</dbReference>
<dbReference type="PANTHER" id="PTHR11728">
    <property type="entry name" value="GLYCEROL-3-PHOSPHATE DEHYDROGENASE"/>
    <property type="match status" value="1"/>
</dbReference>
<dbReference type="PANTHER" id="PTHR11728:SF1">
    <property type="entry name" value="GLYCEROL-3-PHOSPHATE DEHYDROGENASE [NAD(+)] 2, CHLOROPLASTIC"/>
    <property type="match status" value="1"/>
</dbReference>
<dbReference type="Pfam" id="PF07479">
    <property type="entry name" value="NAD_Gly3P_dh_C"/>
    <property type="match status" value="1"/>
</dbReference>
<dbReference type="Pfam" id="PF01210">
    <property type="entry name" value="NAD_Gly3P_dh_N"/>
    <property type="match status" value="1"/>
</dbReference>
<dbReference type="PIRSF" id="PIRSF000114">
    <property type="entry name" value="Glycerol-3-P_dh"/>
    <property type="match status" value="1"/>
</dbReference>
<dbReference type="PRINTS" id="PR00077">
    <property type="entry name" value="GPDHDRGNASE"/>
</dbReference>
<dbReference type="SUPFAM" id="SSF48179">
    <property type="entry name" value="6-phosphogluconate dehydrogenase C-terminal domain-like"/>
    <property type="match status" value="1"/>
</dbReference>
<dbReference type="SUPFAM" id="SSF51735">
    <property type="entry name" value="NAD(P)-binding Rossmann-fold domains"/>
    <property type="match status" value="1"/>
</dbReference>
<dbReference type="PROSITE" id="PS00957">
    <property type="entry name" value="NAD_G3PDH"/>
    <property type="match status" value="1"/>
</dbReference>
<reference key="1">
    <citation type="journal article" date="2005" name="Proc. Natl. Acad. Sci. U.S.A.">
        <title>The psychrophilic lifestyle as revealed by the genome sequence of Colwellia psychrerythraea 34H through genomic and proteomic analyses.</title>
        <authorList>
            <person name="Methe B.A."/>
            <person name="Nelson K.E."/>
            <person name="Deming J.W."/>
            <person name="Momen B."/>
            <person name="Melamud E."/>
            <person name="Zhang X."/>
            <person name="Moult J."/>
            <person name="Madupu R."/>
            <person name="Nelson W.C."/>
            <person name="Dodson R.J."/>
            <person name="Brinkac L.M."/>
            <person name="Daugherty S.C."/>
            <person name="Durkin A.S."/>
            <person name="DeBoy R.T."/>
            <person name="Kolonay J.F."/>
            <person name="Sullivan S.A."/>
            <person name="Zhou L."/>
            <person name="Davidsen T.M."/>
            <person name="Wu M."/>
            <person name="Huston A.L."/>
            <person name="Lewis M."/>
            <person name="Weaver B."/>
            <person name="Weidman J.F."/>
            <person name="Khouri H."/>
            <person name="Utterback T.R."/>
            <person name="Feldblyum T.V."/>
            <person name="Fraser C.M."/>
        </authorList>
    </citation>
    <scope>NUCLEOTIDE SEQUENCE [LARGE SCALE GENOMIC DNA]</scope>
    <source>
        <strain>34H / ATCC BAA-681</strain>
    </source>
</reference>